<comment type="function">
    <text evidence="1">Forms part of the ribosomal stalk, playing a central role in the interaction of the ribosome with GTP-bound translation factors.</text>
</comment>
<comment type="subunit">
    <text evidence="1">Part of the ribosomal stalk of the 50S ribosomal subunit. The N-terminus interacts with L11 and the large rRNA to form the base of the stalk. The C-terminus forms an elongated spine to which L12 dimers bind in a sequential fashion forming a multimeric L10(L12)X complex.</text>
</comment>
<comment type="similarity">
    <text evidence="1">Belongs to the universal ribosomal protein uL10 family.</text>
</comment>
<comment type="sequence caution" evidence="2">
    <conflict type="erroneous initiation">
        <sequence resource="EMBL-CDS" id="ABA04609"/>
    </conflict>
</comment>
<proteinExistence type="inferred from homology"/>
<accession>Q3SSY2</accession>
<gene>
    <name evidence="1" type="primary">rplJ</name>
    <name type="ordered locus">Nwi_1348</name>
</gene>
<feature type="chain" id="PRO_0000234863" description="Large ribosomal subunit protein uL10">
    <location>
        <begin position="1"/>
        <end position="172"/>
    </location>
</feature>
<organism>
    <name type="scientific">Nitrobacter winogradskyi (strain ATCC 25391 / DSM 10237 / CIP 104748 / NCIMB 11846 / Nb-255)</name>
    <dbReference type="NCBI Taxonomy" id="323098"/>
    <lineage>
        <taxon>Bacteria</taxon>
        <taxon>Pseudomonadati</taxon>
        <taxon>Pseudomonadota</taxon>
        <taxon>Alphaproteobacteria</taxon>
        <taxon>Hyphomicrobiales</taxon>
        <taxon>Nitrobacteraceae</taxon>
        <taxon>Nitrobacter</taxon>
    </lineage>
</organism>
<reference key="1">
    <citation type="journal article" date="2006" name="Appl. Environ. Microbiol.">
        <title>Genome sequence of the chemolithoautotrophic nitrite-oxidizing bacterium Nitrobacter winogradskyi Nb-255.</title>
        <authorList>
            <person name="Starkenburg S.R."/>
            <person name="Chain P.S.G."/>
            <person name="Sayavedra-Soto L.A."/>
            <person name="Hauser L."/>
            <person name="Land M.L."/>
            <person name="Larimer F.W."/>
            <person name="Malfatti S.A."/>
            <person name="Klotz M.G."/>
            <person name="Bottomley P.J."/>
            <person name="Arp D.J."/>
            <person name="Hickey W.J."/>
        </authorList>
    </citation>
    <scope>NUCLEOTIDE SEQUENCE [LARGE SCALE GENOMIC DNA]</scope>
    <source>
        <strain>ATCC 25391 / DSM 10237 / CIP 104748 / NCIMB 11846 / Nb-255</strain>
    </source>
</reference>
<evidence type="ECO:0000255" key="1">
    <source>
        <dbReference type="HAMAP-Rule" id="MF_00362"/>
    </source>
</evidence>
<evidence type="ECO:0000305" key="2"/>
<name>RL10_NITWN</name>
<protein>
    <recommendedName>
        <fullName evidence="1">Large ribosomal subunit protein uL10</fullName>
    </recommendedName>
    <alternativeName>
        <fullName evidence="2">50S ribosomal protein L10</fullName>
    </alternativeName>
</protein>
<dbReference type="EMBL" id="CP000115">
    <property type="protein sequence ID" value="ABA04609.1"/>
    <property type="status" value="ALT_INIT"/>
    <property type="molecule type" value="Genomic_DNA"/>
</dbReference>
<dbReference type="RefSeq" id="WP_011314627.1">
    <property type="nucleotide sequence ID" value="NC_007406.1"/>
</dbReference>
<dbReference type="SMR" id="Q3SSY2"/>
<dbReference type="STRING" id="323098.Nwi_1348"/>
<dbReference type="KEGG" id="nwi:Nwi_1348"/>
<dbReference type="eggNOG" id="COG0244">
    <property type="taxonomic scope" value="Bacteria"/>
</dbReference>
<dbReference type="HOGENOM" id="CLU_092227_0_0_5"/>
<dbReference type="OrthoDB" id="9791972at2"/>
<dbReference type="Proteomes" id="UP000002531">
    <property type="component" value="Chromosome"/>
</dbReference>
<dbReference type="GO" id="GO:0015934">
    <property type="term" value="C:large ribosomal subunit"/>
    <property type="evidence" value="ECO:0007669"/>
    <property type="project" value="InterPro"/>
</dbReference>
<dbReference type="GO" id="GO:0070180">
    <property type="term" value="F:large ribosomal subunit rRNA binding"/>
    <property type="evidence" value="ECO:0007669"/>
    <property type="project" value="UniProtKB-UniRule"/>
</dbReference>
<dbReference type="GO" id="GO:0003735">
    <property type="term" value="F:structural constituent of ribosome"/>
    <property type="evidence" value="ECO:0007669"/>
    <property type="project" value="InterPro"/>
</dbReference>
<dbReference type="GO" id="GO:0006412">
    <property type="term" value="P:translation"/>
    <property type="evidence" value="ECO:0007669"/>
    <property type="project" value="UniProtKB-UniRule"/>
</dbReference>
<dbReference type="CDD" id="cd05797">
    <property type="entry name" value="Ribosomal_L10"/>
    <property type="match status" value="1"/>
</dbReference>
<dbReference type="Gene3D" id="3.30.70.1730">
    <property type="match status" value="1"/>
</dbReference>
<dbReference type="Gene3D" id="6.10.250.290">
    <property type="match status" value="1"/>
</dbReference>
<dbReference type="HAMAP" id="MF_00362">
    <property type="entry name" value="Ribosomal_uL10"/>
    <property type="match status" value="1"/>
</dbReference>
<dbReference type="InterPro" id="IPR001790">
    <property type="entry name" value="Ribosomal_uL10"/>
</dbReference>
<dbReference type="InterPro" id="IPR043141">
    <property type="entry name" value="Ribosomal_uL10-like_sf"/>
</dbReference>
<dbReference type="InterPro" id="IPR022973">
    <property type="entry name" value="Ribosomal_uL10_bac"/>
</dbReference>
<dbReference type="InterPro" id="IPR047865">
    <property type="entry name" value="Ribosomal_uL10_bac_type"/>
</dbReference>
<dbReference type="InterPro" id="IPR002363">
    <property type="entry name" value="Ribosomal_uL10_CS_bac"/>
</dbReference>
<dbReference type="NCBIfam" id="NF000955">
    <property type="entry name" value="PRK00099.1-1"/>
    <property type="match status" value="1"/>
</dbReference>
<dbReference type="PANTHER" id="PTHR11560">
    <property type="entry name" value="39S RIBOSOMAL PROTEIN L10, MITOCHONDRIAL"/>
    <property type="match status" value="1"/>
</dbReference>
<dbReference type="Pfam" id="PF00466">
    <property type="entry name" value="Ribosomal_L10"/>
    <property type="match status" value="1"/>
</dbReference>
<dbReference type="SUPFAM" id="SSF160369">
    <property type="entry name" value="Ribosomal protein L10-like"/>
    <property type="match status" value="1"/>
</dbReference>
<dbReference type="PROSITE" id="PS01109">
    <property type="entry name" value="RIBOSOMAL_L10"/>
    <property type="match status" value="1"/>
</dbReference>
<sequence>MERAAKKEAVEQLNETFRTTGVAIVAHYSGLTVAQMQTLRKQMKQAGASVKVSKNRLAKIALEGTDVVAIGSLLKGPTVIATSSDPVAAPKVAVEFAKTNENFVVLGGSMGKTVLDVNGVKALASLPSLDELRGKLVGLLVAPATKIAQLSTAPAAKLARVVQAYASKDEAA</sequence>
<keyword id="KW-1185">Reference proteome</keyword>
<keyword id="KW-0687">Ribonucleoprotein</keyword>
<keyword id="KW-0689">Ribosomal protein</keyword>
<keyword id="KW-0694">RNA-binding</keyword>
<keyword id="KW-0699">rRNA-binding</keyword>